<dbReference type="EC" id="2.3.1.275" evidence="1"/>
<dbReference type="EMBL" id="AP009324">
    <property type="protein sequence ID" value="BAF78224.1"/>
    <property type="molecule type" value="Genomic_DNA"/>
</dbReference>
<dbReference type="RefSeq" id="WP_000972779.1">
    <property type="nucleotide sequence ID" value="NC_009782.1"/>
</dbReference>
<dbReference type="SMR" id="A7X211"/>
<dbReference type="KEGG" id="saw:SAHV_1341"/>
<dbReference type="HOGENOM" id="CLU_081254_4_0_9"/>
<dbReference type="UniPathway" id="UPA00085"/>
<dbReference type="GO" id="GO:0005886">
    <property type="term" value="C:plasma membrane"/>
    <property type="evidence" value="ECO:0007669"/>
    <property type="project" value="UniProtKB-SubCell"/>
</dbReference>
<dbReference type="GO" id="GO:0043772">
    <property type="term" value="F:acyl-phosphate glycerol-3-phosphate acyltransferase activity"/>
    <property type="evidence" value="ECO:0007669"/>
    <property type="project" value="UniProtKB-UniRule"/>
</dbReference>
<dbReference type="GO" id="GO:0008654">
    <property type="term" value="P:phospholipid biosynthetic process"/>
    <property type="evidence" value="ECO:0007669"/>
    <property type="project" value="UniProtKB-UniRule"/>
</dbReference>
<dbReference type="HAMAP" id="MF_01043">
    <property type="entry name" value="PlsY"/>
    <property type="match status" value="1"/>
</dbReference>
<dbReference type="InterPro" id="IPR003811">
    <property type="entry name" value="G3P_acylTferase_PlsY"/>
</dbReference>
<dbReference type="NCBIfam" id="TIGR00023">
    <property type="entry name" value="glycerol-3-phosphate 1-O-acyltransferase PlsY"/>
    <property type="match status" value="1"/>
</dbReference>
<dbReference type="PANTHER" id="PTHR30309:SF0">
    <property type="entry name" value="GLYCEROL-3-PHOSPHATE ACYLTRANSFERASE-RELATED"/>
    <property type="match status" value="1"/>
</dbReference>
<dbReference type="PANTHER" id="PTHR30309">
    <property type="entry name" value="INNER MEMBRANE PROTEIN YGIH"/>
    <property type="match status" value="1"/>
</dbReference>
<dbReference type="Pfam" id="PF02660">
    <property type="entry name" value="G3P_acyltransf"/>
    <property type="match status" value="1"/>
</dbReference>
<dbReference type="SMART" id="SM01207">
    <property type="entry name" value="G3P_acyltransf"/>
    <property type="match status" value="1"/>
</dbReference>
<accession>A7X211</accession>
<proteinExistence type="inferred from homology"/>
<reference key="1">
    <citation type="journal article" date="2008" name="Antimicrob. Agents Chemother.">
        <title>Mutated response regulator graR is responsible for phenotypic conversion of Staphylococcus aureus from heterogeneous vancomycin-intermediate resistance to vancomycin-intermediate resistance.</title>
        <authorList>
            <person name="Neoh H.-M."/>
            <person name="Cui L."/>
            <person name="Yuzawa H."/>
            <person name="Takeuchi F."/>
            <person name="Matsuo M."/>
            <person name="Hiramatsu K."/>
        </authorList>
    </citation>
    <scope>NUCLEOTIDE SEQUENCE [LARGE SCALE GENOMIC DNA]</scope>
    <source>
        <strain>Mu3 / ATCC 700698</strain>
    </source>
</reference>
<sequence length="202" mass="22232">MMIIVMLLLSYLIGAFPSGFVIGKLFFKKDIRQFGSGNTGATNSFRVLGRPAGFLVTFLDIFKGFITVFFPLWLPVHADGPISTFFTNGLIVGLFAILGHVYPVYLKFQGGKAVATSAGVVLGVNPILLLILAIIFFIVLKIFKYVSLASIVAAICCVIGSLIIQDYILLVVSFLVSIILIIRHRSNIARIFRGEEPKIKWM</sequence>
<organism>
    <name type="scientific">Staphylococcus aureus (strain Mu3 / ATCC 700698)</name>
    <dbReference type="NCBI Taxonomy" id="418127"/>
    <lineage>
        <taxon>Bacteria</taxon>
        <taxon>Bacillati</taxon>
        <taxon>Bacillota</taxon>
        <taxon>Bacilli</taxon>
        <taxon>Bacillales</taxon>
        <taxon>Staphylococcaceae</taxon>
        <taxon>Staphylococcus</taxon>
    </lineage>
</organism>
<comment type="function">
    <text evidence="1">Catalyzes the transfer of an acyl group from acyl-phosphate (acyl-PO(4)) to glycerol-3-phosphate (G3P) to form lysophosphatidic acid (LPA). This enzyme utilizes acyl-phosphate as fatty acyl donor, but not acyl-CoA or acyl-ACP.</text>
</comment>
<comment type="catalytic activity">
    <reaction evidence="1">
        <text>an acyl phosphate + sn-glycerol 3-phosphate = a 1-acyl-sn-glycero-3-phosphate + phosphate</text>
        <dbReference type="Rhea" id="RHEA:34075"/>
        <dbReference type="ChEBI" id="CHEBI:43474"/>
        <dbReference type="ChEBI" id="CHEBI:57597"/>
        <dbReference type="ChEBI" id="CHEBI:57970"/>
        <dbReference type="ChEBI" id="CHEBI:59918"/>
        <dbReference type="EC" id="2.3.1.275"/>
    </reaction>
</comment>
<comment type="pathway">
    <text evidence="1">Lipid metabolism; phospholipid metabolism.</text>
</comment>
<comment type="subunit">
    <text evidence="1">Probably interacts with PlsX.</text>
</comment>
<comment type="subcellular location">
    <subcellularLocation>
        <location evidence="1">Cell membrane</location>
        <topology evidence="1">Multi-pass membrane protein</topology>
    </subcellularLocation>
</comment>
<comment type="similarity">
    <text evidence="1">Belongs to the PlsY family.</text>
</comment>
<name>PLSY_STAA1</name>
<feature type="chain" id="PRO_1000064231" description="Glycerol-3-phosphate acyltransferase">
    <location>
        <begin position="1"/>
        <end position="202"/>
    </location>
</feature>
<feature type="transmembrane region" description="Helical" evidence="1">
    <location>
        <begin position="2"/>
        <end position="22"/>
    </location>
</feature>
<feature type="transmembrane region" description="Helical" evidence="1">
    <location>
        <begin position="54"/>
        <end position="74"/>
    </location>
</feature>
<feature type="transmembrane region" description="Helical" evidence="1">
    <location>
        <begin position="85"/>
        <end position="105"/>
    </location>
</feature>
<feature type="transmembrane region" description="Helical" evidence="1">
    <location>
        <begin position="120"/>
        <end position="140"/>
    </location>
</feature>
<feature type="transmembrane region" description="Helical" evidence="1">
    <location>
        <begin position="141"/>
        <end position="161"/>
    </location>
</feature>
<feature type="transmembrane region" description="Helical" evidence="1">
    <location>
        <begin position="162"/>
        <end position="182"/>
    </location>
</feature>
<gene>
    <name evidence="1" type="primary">plsY</name>
    <name type="ordered locus">SAHV_1341</name>
</gene>
<keyword id="KW-1003">Cell membrane</keyword>
<keyword id="KW-0444">Lipid biosynthesis</keyword>
<keyword id="KW-0443">Lipid metabolism</keyword>
<keyword id="KW-0472">Membrane</keyword>
<keyword id="KW-0594">Phospholipid biosynthesis</keyword>
<keyword id="KW-1208">Phospholipid metabolism</keyword>
<keyword id="KW-0808">Transferase</keyword>
<keyword id="KW-0812">Transmembrane</keyword>
<keyword id="KW-1133">Transmembrane helix</keyword>
<protein>
    <recommendedName>
        <fullName evidence="1">Glycerol-3-phosphate acyltransferase</fullName>
    </recommendedName>
    <alternativeName>
        <fullName evidence="1">Acyl-PO4 G3P acyltransferase</fullName>
    </alternativeName>
    <alternativeName>
        <fullName evidence="1">Acyl-phosphate--glycerol-3-phosphate acyltransferase</fullName>
    </alternativeName>
    <alternativeName>
        <fullName evidence="1">G3P acyltransferase</fullName>
        <shortName evidence="1">GPAT</shortName>
        <ecNumber evidence="1">2.3.1.275</ecNumber>
    </alternativeName>
    <alternativeName>
        <fullName evidence="1">Lysophosphatidic acid synthase</fullName>
        <shortName evidence="1">LPA synthase</shortName>
    </alternativeName>
</protein>
<evidence type="ECO:0000255" key="1">
    <source>
        <dbReference type="HAMAP-Rule" id="MF_01043"/>
    </source>
</evidence>